<feature type="chain" id="PRO_0000111533" description="Ribonuclease HII">
    <location>
        <begin position="1"/>
        <end position="225"/>
    </location>
</feature>
<feature type="domain" description="RNase H type-2" evidence="2">
    <location>
        <begin position="35"/>
        <end position="225"/>
    </location>
</feature>
<feature type="binding site" evidence="1">
    <location>
        <position position="41"/>
    </location>
    <ligand>
        <name>a divalent metal cation</name>
        <dbReference type="ChEBI" id="CHEBI:60240"/>
    </ligand>
</feature>
<feature type="binding site" evidence="1">
    <location>
        <position position="42"/>
    </location>
    <ligand>
        <name>a divalent metal cation</name>
        <dbReference type="ChEBI" id="CHEBI:60240"/>
    </ligand>
</feature>
<feature type="binding site" evidence="1">
    <location>
        <position position="137"/>
    </location>
    <ligand>
        <name>a divalent metal cation</name>
        <dbReference type="ChEBI" id="CHEBI:60240"/>
    </ligand>
</feature>
<organism>
    <name type="scientific">Nostoc sp. (strain PCC 7120 / SAG 25.82 / UTEX 2576)</name>
    <dbReference type="NCBI Taxonomy" id="103690"/>
    <lineage>
        <taxon>Bacteria</taxon>
        <taxon>Bacillati</taxon>
        <taxon>Cyanobacteriota</taxon>
        <taxon>Cyanophyceae</taxon>
        <taxon>Nostocales</taxon>
        <taxon>Nostocaceae</taxon>
        <taxon>Nostoc</taxon>
    </lineage>
</organism>
<reference key="1">
    <citation type="journal article" date="2001" name="DNA Res.">
        <title>Complete genomic sequence of the filamentous nitrogen-fixing cyanobacterium Anabaena sp. strain PCC 7120.</title>
        <authorList>
            <person name="Kaneko T."/>
            <person name="Nakamura Y."/>
            <person name="Wolk C.P."/>
            <person name="Kuritz T."/>
            <person name="Sasamoto S."/>
            <person name="Watanabe A."/>
            <person name="Iriguchi M."/>
            <person name="Ishikawa A."/>
            <person name="Kawashima K."/>
            <person name="Kimura T."/>
            <person name="Kishida Y."/>
            <person name="Kohara M."/>
            <person name="Matsumoto M."/>
            <person name="Matsuno A."/>
            <person name="Muraki A."/>
            <person name="Nakazaki N."/>
            <person name="Shimpo S."/>
            <person name="Sugimoto M."/>
            <person name="Takazawa M."/>
            <person name="Yamada M."/>
            <person name="Yasuda M."/>
            <person name="Tabata S."/>
        </authorList>
    </citation>
    <scope>NUCLEOTIDE SEQUENCE [LARGE SCALE GENOMIC DNA]</scope>
    <source>
        <strain>PCC 7120 / SAG 25.82 / UTEX 2576</strain>
    </source>
</reference>
<evidence type="ECO:0000255" key="1">
    <source>
        <dbReference type="HAMAP-Rule" id="MF_00052"/>
    </source>
</evidence>
<evidence type="ECO:0000255" key="2">
    <source>
        <dbReference type="PROSITE-ProRule" id="PRU01319"/>
    </source>
</evidence>
<gene>
    <name evidence="1" type="primary">rnhB</name>
    <name type="ordered locus">alr4332</name>
</gene>
<keyword id="KW-0963">Cytoplasm</keyword>
<keyword id="KW-0255">Endonuclease</keyword>
<keyword id="KW-0378">Hydrolase</keyword>
<keyword id="KW-0464">Manganese</keyword>
<keyword id="KW-0479">Metal-binding</keyword>
<keyword id="KW-0540">Nuclease</keyword>
<keyword id="KW-1185">Reference proteome</keyword>
<proteinExistence type="inferred from homology"/>
<protein>
    <recommendedName>
        <fullName evidence="1">Ribonuclease HII</fullName>
        <shortName evidence="1">RNase HII</shortName>
        <ecNumber evidence="1">3.1.26.4</ecNumber>
    </recommendedName>
</protein>
<sequence length="225" mass="24804">MMLKKEQTTNNLKLPISLNASGWLESSPDWSNISGLVAGVDEVGRGALFGPVVAASVILPASAFPHLMTAEIKDSKKLSHSRRVQLAQQISTLAIDWRIGYATTAEIDRINILQATLLAMKRSVKKLKLQPILCLIDGNQPVQDLLMLQQTIVKGDERSLNIAAASIMAKVWRDDLIQRLATKYPMYDLKSNKGYGSKKHLLALAQHGASPLHRQSFRPCQISPD</sequence>
<accession>Q8YP68</accession>
<name>RNH2_NOSS1</name>
<dbReference type="EC" id="3.1.26.4" evidence="1"/>
<dbReference type="EMBL" id="BA000019">
    <property type="protein sequence ID" value="BAB76031.1"/>
    <property type="molecule type" value="Genomic_DNA"/>
</dbReference>
<dbReference type="PIR" id="AE2347">
    <property type="entry name" value="AE2347"/>
</dbReference>
<dbReference type="RefSeq" id="WP_010998470.1">
    <property type="nucleotide sequence ID" value="NZ_RSCN01000027.1"/>
</dbReference>
<dbReference type="SMR" id="Q8YP68"/>
<dbReference type="STRING" id="103690.gene:10496381"/>
<dbReference type="KEGG" id="ana:alr4332"/>
<dbReference type="eggNOG" id="COG0164">
    <property type="taxonomic scope" value="Bacteria"/>
</dbReference>
<dbReference type="OrthoDB" id="9803420at2"/>
<dbReference type="Proteomes" id="UP000002483">
    <property type="component" value="Chromosome"/>
</dbReference>
<dbReference type="GO" id="GO:0005737">
    <property type="term" value="C:cytoplasm"/>
    <property type="evidence" value="ECO:0007669"/>
    <property type="project" value="UniProtKB-SubCell"/>
</dbReference>
<dbReference type="GO" id="GO:0032299">
    <property type="term" value="C:ribonuclease H2 complex"/>
    <property type="evidence" value="ECO:0007669"/>
    <property type="project" value="TreeGrafter"/>
</dbReference>
<dbReference type="GO" id="GO:0030145">
    <property type="term" value="F:manganese ion binding"/>
    <property type="evidence" value="ECO:0007669"/>
    <property type="project" value="UniProtKB-UniRule"/>
</dbReference>
<dbReference type="GO" id="GO:0003723">
    <property type="term" value="F:RNA binding"/>
    <property type="evidence" value="ECO:0007669"/>
    <property type="project" value="InterPro"/>
</dbReference>
<dbReference type="GO" id="GO:0004523">
    <property type="term" value="F:RNA-DNA hybrid ribonuclease activity"/>
    <property type="evidence" value="ECO:0007669"/>
    <property type="project" value="UniProtKB-UniRule"/>
</dbReference>
<dbReference type="GO" id="GO:0043137">
    <property type="term" value="P:DNA replication, removal of RNA primer"/>
    <property type="evidence" value="ECO:0007669"/>
    <property type="project" value="TreeGrafter"/>
</dbReference>
<dbReference type="GO" id="GO:0006298">
    <property type="term" value="P:mismatch repair"/>
    <property type="evidence" value="ECO:0007669"/>
    <property type="project" value="TreeGrafter"/>
</dbReference>
<dbReference type="CDD" id="cd07182">
    <property type="entry name" value="RNase_HII_bacteria_HII_like"/>
    <property type="match status" value="1"/>
</dbReference>
<dbReference type="Gene3D" id="3.30.420.10">
    <property type="entry name" value="Ribonuclease H-like superfamily/Ribonuclease H"/>
    <property type="match status" value="1"/>
</dbReference>
<dbReference type="HAMAP" id="MF_00052_B">
    <property type="entry name" value="RNase_HII_B"/>
    <property type="match status" value="1"/>
</dbReference>
<dbReference type="InterPro" id="IPR022898">
    <property type="entry name" value="RNase_HII"/>
</dbReference>
<dbReference type="InterPro" id="IPR001352">
    <property type="entry name" value="RNase_HII/HIII"/>
</dbReference>
<dbReference type="InterPro" id="IPR024567">
    <property type="entry name" value="RNase_HII/HIII_dom"/>
</dbReference>
<dbReference type="InterPro" id="IPR012337">
    <property type="entry name" value="RNaseH-like_sf"/>
</dbReference>
<dbReference type="InterPro" id="IPR036397">
    <property type="entry name" value="RNaseH_sf"/>
</dbReference>
<dbReference type="NCBIfam" id="NF000595">
    <property type="entry name" value="PRK00015.1-3"/>
    <property type="match status" value="1"/>
</dbReference>
<dbReference type="NCBIfam" id="NF010537">
    <property type="entry name" value="PRK13925.1"/>
    <property type="match status" value="1"/>
</dbReference>
<dbReference type="PANTHER" id="PTHR10954">
    <property type="entry name" value="RIBONUCLEASE H2 SUBUNIT A"/>
    <property type="match status" value="1"/>
</dbReference>
<dbReference type="PANTHER" id="PTHR10954:SF18">
    <property type="entry name" value="RIBONUCLEASE HII"/>
    <property type="match status" value="1"/>
</dbReference>
<dbReference type="Pfam" id="PF01351">
    <property type="entry name" value="RNase_HII"/>
    <property type="match status" value="1"/>
</dbReference>
<dbReference type="SUPFAM" id="SSF53098">
    <property type="entry name" value="Ribonuclease H-like"/>
    <property type="match status" value="1"/>
</dbReference>
<dbReference type="PROSITE" id="PS51975">
    <property type="entry name" value="RNASE_H_2"/>
    <property type="match status" value="1"/>
</dbReference>
<comment type="function">
    <text evidence="1">Endonuclease that specifically degrades the RNA of RNA-DNA hybrids.</text>
</comment>
<comment type="catalytic activity">
    <reaction evidence="1">
        <text>Endonucleolytic cleavage to 5'-phosphomonoester.</text>
        <dbReference type="EC" id="3.1.26.4"/>
    </reaction>
</comment>
<comment type="cofactor">
    <cofactor evidence="1">
        <name>Mn(2+)</name>
        <dbReference type="ChEBI" id="CHEBI:29035"/>
    </cofactor>
    <cofactor evidence="1">
        <name>Mg(2+)</name>
        <dbReference type="ChEBI" id="CHEBI:18420"/>
    </cofactor>
    <text evidence="1">Manganese or magnesium. Binds 1 divalent metal ion per monomer in the absence of substrate. May bind a second metal ion after substrate binding.</text>
</comment>
<comment type="subcellular location">
    <subcellularLocation>
        <location evidence="1">Cytoplasm</location>
    </subcellularLocation>
</comment>
<comment type="similarity">
    <text evidence="1">Belongs to the RNase HII family.</text>
</comment>